<proteinExistence type="inferred from homology"/>
<accession>Q2GH43</accession>
<comment type="function">
    <text evidence="1">Binds 16S rRNA, required for the assembly of 30S particles and may also be responsible for determining the conformation of the 16S rRNA at the A site.</text>
</comment>
<comment type="subunit">
    <text evidence="1">Part of the 30S ribosomal subunit. Contacts proteins S3 and S10.</text>
</comment>
<comment type="similarity">
    <text evidence="1">Belongs to the universal ribosomal protein uS14 family.</text>
</comment>
<evidence type="ECO:0000255" key="1">
    <source>
        <dbReference type="HAMAP-Rule" id="MF_00537"/>
    </source>
</evidence>
<evidence type="ECO:0000305" key="2"/>
<sequence>MSRKSVIQRNLKRISICNRLKNKREELKAIIKDQSISMNDRFLAQVKLSKLPRDSSYIRIRNRCLITGRPRGCYRKFKVSRIVLRQLGSIGQIPGLTKSSW</sequence>
<gene>
    <name evidence="1" type="primary">rpsN</name>
    <name type="ordered locus">ECH_0422</name>
</gene>
<organism>
    <name type="scientific">Ehrlichia chaffeensis (strain ATCC CRL-10679 / Arkansas)</name>
    <dbReference type="NCBI Taxonomy" id="205920"/>
    <lineage>
        <taxon>Bacteria</taxon>
        <taxon>Pseudomonadati</taxon>
        <taxon>Pseudomonadota</taxon>
        <taxon>Alphaproteobacteria</taxon>
        <taxon>Rickettsiales</taxon>
        <taxon>Anaplasmataceae</taxon>
        <taxon>Ehrlichia</taxon>
    </lineage>
</organism>
<name>RS14_EHRCR</name>
<keyword id="KW-1185">Reference proteome</keyword>
<keyword id="KW-0687">Ribonucleoprotein</keyword>
<keyword id="KW-0689">Ribosomal protein</keyword>
<keyword id="KW-0694">RNA-binding</keyword>
<keyword id="KW-0699">rRNA-binding</keyword>
<protein>
    <recommendedName>
        <fullName evidence="1">Small ribosomal subunit protein uS14</fullName>
    </recommendedName>
    <alternativeName>
        <fullName evidence="2">30S ribosomal protein S14</fullName>
    </alternativeName>
</protein>
<feature type="chain" id="PRO_1000128396" description="Small ribosomal subunit protein uS14">
    <location>
        <begin position="1"/>
        <end position="101"/>
    </location>
</feature>
<dbReference type="EMBL" id="CP000236">
    <property type="protein sequence ID" value="ABD45209.1"/>
    <property type="molecule type" value="Genomic_DNA"/>
</dbReference>
<dbReference type="RefSeq" id="WP_011452589.1">
    <property type="nucleotide sequence ID" value="NC_007799.1"/>
</dbReference>
<dbReference type="SMR" id="Q2GH43"/>
<dbReference type="STRING" id="205920.ECH_0422"/>
<dbReference type="KEGG" id="ech:ECH_0422"/>
<dbReference type="eggNOG" id="COG0199">
    <property type="taxonomic scope" value="Bacteria"/>
</dbReference>
<dbReference type="HOGENOM" id="CLU_139869_0_1_5"/>
<dbReference type="OrthoDB" id="9810484at2"/>
<dbReference type="Proteomes" id="UP000008320">
    <property type="component" value="Chromosome"/>
</dbReference>
<dbReference type="GO" id="GO:0005737">
    <property type="term" value="C:cytoplasm"/>
    <property type="evidence" value="ECO:0007669"/>
    <property type="project" value="UniProtKB-ARBA"/>
</dbReference>
<dbReference type="GO" id="GO:0015935">
    <property type="term" value="C:small ribosomal subunit"/>
    <property type="evidence" value="ECO:0007669"/>
    <property type="project" value="TreeGrafter"/>
</dbReference>
<dbReference type="GO" id="GO:0019843">
    <property type="term" value="F:rRNA binding"/>
    <property type="evidence" value="ECO:0007669"/>
    <property type="project" value="UniProtKB-UniRule"/>
</dbReference>
<dbReference type="GO" id="GO:0003735">
    <property type="term" value="F:structural constituent of ribosome"/>
    <property type="evidence" value="ECO:0007669"/>
    <property type="project" value="InterPro"/>
</dbReference>
<dbReference type="GO" id="GO:0006412">
    <property type="term" value="P:translation"/>
    <property type="evidence" value="ECO:0007669"/>
    <property type="project" value="UniProtKB-UniRule"/>
</dbReference>
<dbReference type="FunFam" id="1.10.287.1480:FF:000001">
    <property type="entry name" value="30S ribosomal protein S14"/>
    <property type="match status" value="1"/>
</dbReference>
<dbReference type="Gene3D" id="1.10.287.1480">
    <property type="match status" value="1"/>
</dbReference>
<dbReference type="HAMAP" id="MF_00537">
    <property type="entry name" value="Ribosomal_uS14_1"/>
    <property type="match status" value="1"/>
</dbReference>
<dbReference type="InterPro" id="IPR001209">
    <property type="entry name" value="Ribosomal_uS14"/>
</dbReference>
<dbReference type="InterPro" id="IPR023036">
    <property type="entry name" value="Ribosomal_uS14_bac/plastid"/>
</dbReference>
<dbReference type="InterPro" id="IPR018271">
    <property type="entry name" value="Ribosomal_uS14_CS"/>
</dbReference>
<dbReference type="NCBIfam" id="NF006477">
    <property type="entry name" value="PRK08881.1"/>
    <property type="match status" value="1"/>
</dbReference>
<dbReference type="PANTHER" id="PTHR19836">
    <property type="entry name" value="30S RIBOSOMAL PROTEIN S14"/>
    <property type="match status" value="1"/>
</dbReference>
<dbReference type="PANTHER" id="PTHR19836:SF19">
    <property type="entry name" value="SMALL RIBOSOMAL SUBUNIT PROTEIN US14M"/>
    <property type="match status" value="1"/>
</dbReference>
<dbReference type="Pfam" id="PF00253">
    <property type="entry name" value="Ribosomal_S14"/>
    <property type="match status" value="1"/>
</dbReference>
<dbReference type="SUPFAM" id="SSF57716">
    <property type="entry name" value="Glucocorticoid receptor-like (DNA-binding domain)"/>
    <property type="match status" value="1"/>
</dbReference>
<dbReference type="PROSITE" id="PS00527">
    <property type="entry name" value="RIBOSOMAL_S14"/>
    <property type="match status" value="1"/>
</dbReference>
<reference key="1">
    <citation type="journal article" date="2006" name="PLoS Genet.">
        <title>Comparative genomics of emerging human ehrlichiosis agents.</title>
        <authorList>
            <person name="Dunning Hotopp J.C."/>
            <person name="Lin M."/>
            <person name="Madupu R."/>
            <person name="Crabtree J."/>
            <person name="Angiuoli S.V."/>
            <person name="Eisen J.A."/>
            <person name="Seshadri R."/>
            <person name="Ren Q."/>
            <person name="Wu M."/>
            <person name="Utterback T.R."/>
            <person name="Smith S."/>
            <person name="Lewis M."/>
            <person name="Khouri H."/>
            <person name="Zhang C."/>
            <person name="Niu H."/>
            <person name="Lin Q."/>
            <person name="Ohashi N."/>
            <person name="Zhi N."/>
            <person name="Nelson W.C."/>
            <person name="Brinkac L.M."/>
            <person name="Dodson R.J."/>
            <person name="Rosovitz M.J."/>
            <person name="Sundaram J.P."/>
            <person name="Daugherty S.C."/>
            <person name="Davidsen T."/>
            <person name="Durkin A.S."/>
            <person name="Gwinn M.L."/>
            <person name="Haft D.H."/>
            <person name="Selengut J.D."/>
            <person name="Sullivan S.A."/>
            <person name="Zafar N."/>
            <person name="Zhou L."/>
            <person name="Benahmed F."/>
            <person name="Forberger H."/>
            <person name="Halpin R."/>
            <person name="Mulligan S."/>
            <person name="Robinson J."/>
            <person name="White O."/>
            <person name="Rikihisa Y."/>
            <person name="Tettelin H."/>
        </authorList>
    </citation>
    <scope>NUCLEOTIDE SEQUENCE [LARGE SCALE GENOMIC DNA]</scope>
    <source>
        <strain>ATCC CRL-10679 / Arkansas</strain>
    </source>
</reference>